<organism>
    <name type="scientific">Herminiimonas arsenicoxydans</name>
    <dbReference type="NCBI Taxonomy" id="204773"/>
    <lineage>
        <taxon>Bacteria</taxon>
        <taxon>Pseudomonadati</taxon>
        <taxon>Pseudomonadota</taxon>
        <taxon>Betaproteobacteria</taxon>
        <taxon>Burkholderiales</taxon>
        <taxon>Oxalobacteraceae</taxon>
        <taxon>Herminiimonas</taxon>
    </lineage>
</organism>
<name>OBG_HERAR</name>
<feature type="chain" id="PRO_0000385978" description="GTPase Obg">
    <location>
        <begin position="1"/>
        <end position="369"/>
    </location>
</feature>
<feature type="domain" description="Obg" evidence="2">
    <location>
        <begin position="1"/>
        <end position="159"/>
    </location>
</feature>
<feature type="domain" description="OBG-type G" evidence="1">
    <location>
        <begin position="160"/>
        <end position="333"/>
    </location>
</feature>
<feature type="region of interest" description="Disordered" evidence="3">
    <location>
        <begin position="128"/>
        <end position="148"/>
    </location>
</feature>
<feature type="binding site" evidence="1">
    <location>
        <begin position="166"/>
        <end position="173"/>
    </location>
    <ligand>
        <name>GTP</name>
        <dbReference type="ChEBI" id="CHEBI:37565"/>
    </ligand>
</feature>
<feature type="binding site" evidence="1">
    <location>
        <position position="173"/>
    </location>
    <ligand>
        <name>Mg(2+)</name>
        <dbReference type="ChEBI" id="CHEBI:18420"/>
    </ligand>
</feature>
<feature type="binding site" evidence="1">
    <location>
        <begin position="191"/>
        <end position="195"/>
    </location>
    <ligand>
        <name>GTP</name>
        <dbReference type="ChEBI" id="CHEBI:37565"/>
    </ligand>
</feature>
<feature type="binding site" evidence="1">
    <location>
        <position position="193"/>
    </location>
    <ligand>
        <name>Mg(2+)</name>
        <dbReference type="ChEBI" id="CHEBI:18420"/>
    </ligand>
</feature>
<feature type="binding site" evidence="1">
    <location>
        <begin position="213"/>
        <end position="216"/>
    </location>
    <ligand>
        <name>GTP</name>
        <dbReference type="ChEBI" id="CHEBI:37565"/>
    </ligand>
</feature>
<feature type="binding site" evidence="1">
    <location>
        <begin position="283"/>
        <end position="286"/>
    </location>
    <ligand>
        <name>GTP</name>
        <dbReference type="ChEBI" id="CHEBI:37565"/>
    </ligand>
</feature>
<feature type="binding site" evidence="1">
    <location>
        <begin position="314"/>
        <end position="316"/>
    </location>
    <ligand>
        <name>GTP</name>
        <dbReference type="ChEBI" id="CHEBI:37565"/>
    </ligand>
</feature>
<reference key="1">
    <citation type="journal article" date="2007" name="PLoS Genet.">
        <title>A tale of two oxidation states: bacterial colonization of arsenic-rich environments.</title>
        <authorList>
            <person name="Muller D."/>
            <person name="Medigue C."/>
            <person name="Koechler S."/>
            <person name="Barbe V."/>
            <person name="Barakat M."/>
            <person name="Talla E."/>
            <person name="Bonnefoy V."/>
            <person name="Krin E."/>
            <person name="Arsene-Ploetze F."/>
            <person name="Carapito C."/>
            <person name="Chandler M."/>
            <person name="Cournoyer B."/>
            <person name="Cruveiller S."/>
            <person name="Dossat C."/>
            <person name="Duval S."/>
            <person name="Heymann M."/>
            <person name="Leize E."/>
            <person name="Lieutaud A."/>
            <person name="Lievremont D."/>
            <person name="Makita Y."/>
            <person name="Mangenot S."/>
            <person name="Nitschke W."/>
            <person name="Ortet P."/>
            <person name="Perdrial N."/>
            <person name="Schoepp B."/>
            <person name="Siguier P."/>
            <person name="Simeonova D.D."/>
            <person name="Rouy Z."/>
            <person name="Segurens B."/>
            <person name="Turlin E."/>
            <person name="Vallenet D."/>
            <person name="van Dorsselaer A."/>
            <person name="Weiss S."/>
            <person name="Weissenbach J."/>
            <person name="Lett M.-C."/>
            <person name="Danchin A."/>
            <person name="Bertin P.N."/>
        </authorList>
    </citation>
    <scope>NUCLEOTIDE SEQUENCE [LARGE SCALE GENOMIC DNA]</scope>
    <source>
        <strain>ULPAs1</strain>
    </source>
</reference>
<evidence type="ECO:0000255" key="1">
    <source>
        <dbReference type="HAMAP-Rule" id="MF_01454"/>
    </source>
</evidence>
<evidence type="ECO:0000255" key="2">
    <source>
        <dbReference type="PROSITE-ProRule" id="PRU01231"/>
    </source>
</evidence>
<evidence type="ECO:0000256" key="3">
    <source>
        <dbReference type="SAM" id="MobiDB-lite"/>
    </source>
</evidence>
<dbReference type="EC" id="3.6.5.-" evidence="1"/>
<dbReference type="EMBL" id="CU207211">
    <property type="protein sequence ID" value="CAL62901.1"/>
    <property type="molecule type" value="Genomic_DNA"/>
</dbReference>
<dbReference type="SMR" id="A4G8R4"/>
<dbReference type="STRING" id="204773.HEAR2785"/>
<dbReference type="KEGG" id="har:HEAR2785"/>
<dbReference type="eggNOG" id="COG0536">
    <property type="taxonomic scope" value="Bacteria"/>
</dbReference>
<dbReference type="HOGENOM" id="CLU_011747_2_0_4"/>
<dbReference type="OrthoDB" id="9807318at2"/>
<dbReference type="Proteomes" id="UP000006697">
    <property type="component" value="Chromosome"/>
</dbReference>
<dbReference type="GO" id="GO:0005737">
    <property type="term" value="C:cytoplasm"/>
    <property type="evidence" value="ECO:0007669"/>
    <property type="project" value="UniProtKB-SubCell"/>
</dbReference>
<dbReference type="GO" id="GO:0005525">
    <property type="term" value="F:GTP binding"/>
    <property type="evidence" value="ECO:0007669"/>
    <property type="project" value="UniProtKB-UniRule"/>
</dbReference>
<dbReference type="GO" id="GO:0003924">
    <property type="term" value="F:GTPase activity"/>
    <property type="evidence" value="ECO:0007669"/>
    <property type="project" value="UniProtKB-UniRule"/>
</dbReference>
<dbReference type="GO" id="GO:0000287">
    <property type="term" value="F:magnesium ion binding"/>
    <property type="evidence" value="ECO:0007669"/>
    <property type="project" value="InterPro"/>
</dbReference>
<dbReference type="GO" id="GO:0042254">
    <property type="term" value="P:ribosome biogenesis"/>
    <property type="evidence" value="ECO:0007669"/>
    <property type="project" value="UniProtKB-UniRule"/>
</dbReference>
<dbReference type="CDD" id="cd01898">
    <property type="entry name" value="Obg"/>
    <property type="match status" value="1"/>
</dbReference>
<dbReference type="FunFam" id="2.70.210.12:FF:000001">
    <property type="entry name" value="GTPase Obg"/>
    <property type="match status" value="1"/>
</dbReference>
<dbReference type="Gene3D" id="2.70.210.12">
    <property type="entry name" value="GTP1/OBG domain"/>
    <property type="match status" value="1"/>
</dbReference>
<dbReference type="Gene3D" id="3.40.50.300">
    <property type="entry name" value="P-loop containing nucleotide triphosphate hydrolases"/>
    <property type="match status" value="1"/>
</dbReference>
<dbReference type="HAMAP" id="MF_01454">
    <property type="entry name" value="GTPase_Obg"/>
    <property type="match status" value="1"/>
</dbReference>
<dbReference type="InterPro" id="IPR031167">
    <property type="entry name" value="G_OBG"/>
</dbReference>
<dbReference type="InterPro" id="IPR006073">
    <property type="entry name" value="GTP-bd"/>
</dbReference>
<dbReference type="InterPro" id="IPR014100">
    <property type="entry name" value="GTP-bd_Obg/CgtA"/>
</dbReference>
<dbReference type="InterPro" id="IPR006074">
    <property type="entry name" value="GTP1-OBG_CS"/>
</dbReference>
<dbReference type="InterPro" id="IPR006169">
    <property type="entry name" value="GTP1_OBG_dom"/>
</dbReference>
<dbReference type="InterPro" id="IPR036726">
    <property type="entry name" value="GTP1_OBG_dom_sf"/>
</dbReference>
<dbReference type="InterPro" id="IPR045086">
    <property type="entry name" value="OBG_GTPase"/>
</dbReference>
<dbReference type="InterPro" id="IPR027417">
    <property type="entry name" value="P-loop_NTPase"/>
</dbReference>
<dbReference type="NCBIfam" id="TIGR02729">
    <property type="entry name" value="Obg_CgtA"/>
    <property type="match status" value="1"/>
</dbReference>
<dbReference type="NCBIfam" id="NF008954">
    <property type="entry name" value="PRK12296.1"/>
    <property type="match status" value="1"/>
</dbReference>
<dbReference type="NCBIfam" id="NF008955">
    <property type="entry name" value="PRK12297.1"/>
    <property type="match status" value="1"/>
</dbReference>
<dbReference type="NCBIfam" id="NF008956">
    <property type="entry name" value="PRK12299.1"/>
    <property type="match status" value="1"/>
</dbReference>
<dbReference type="PANTHER" id="PTHR11702">
    <property type="entry name" value="DEVELOPMENTALLY REGULATED GTP-BINDING PROTEIN-RELATED"/>
    <property type="match status" value="1"/>
</dbReference>
<dbReference type="PANTHER" id="PTHR11702:SF31">
    <property type="entry name" value="MITOCHONDRIAL RIBOSOME-ASSOCIATED GTPASE 2"/>
    <property type="match status" value="1"/>
</dbReference>
<dbReference type="Pfam" id="PF01018">
    <property type="entry name" value="GTP1_OBG"/>
    <property type="match status" value="1"/>
</dbReference>
<dbReference type="Pfam" id="PF01926">
    <property type="entry name" value="MMR_HSR1"/>
    <property type="match status" value="1"/>
</dbReference>
<dbReference type="PIRSF" id="PIRSF002401">
    <property type="entry name" value="GTP_bd_Obg/CgtA"/>
    <property type="match status" value="1"/>
</dbReference>
<dbReference type="PRINTS" id="PR00326">
    <property type="entry name" value="GTP1OBG"/>
</dbReference>
<dbReference type="SUPFAM" id="SSF82051">
    <property type="entry name" value="Obg GTP-binding protein N-terminal domain"/>
    <property type="match status" value="1"/>
</dbReference>
<dbReference type="SUPFAM" id="SSF52540">
    <property type="entry name" value="P-loop containing nucleoside triphosphate hydrolases"/>
    <property type="match status" value="1"/>
</dbReference>
<dbReference type="PROSITE" id="PS51710">
    <property type="entry name" value="G_OBG"/>
    <property type="match status" value="1"/>
</dbReference>
<dbReference type="PROSITE" id="PS00905">
    <property type="entry name" value="GTP1_OBG"/>
    <property type="match status" value="1"/>
</dbReference>
<dbReference type="PROSITE" id="PS51883">
    <property type="entry name" value="OBG"/>
    <property type="match status" value="1"/>
</dbReference>
<accession>A4G8R4</accession>
<sequence length="369" mass="40792">MKFIDEAKIEVIAGDGGNGVASFCREKFRPFGGPDGGDGGKGGSIWAVADRNINTLVDFRYSKMHKARDGENGRGADCYGKGADDIKLRMPVGTLIIDNNDGELIADLTEHGQEVLIAKGGEGGWGNIHFKSSTNRAPRQKSEGKEGERRELRLELKVLADIGLLGMPNAGKSTFISAVSNARPKIADYPFTTLHPNLGVVRVSHEKSFVIADIPGLIEGASDGAGLGIQFLRHLQRTRLLLHIVDLAPFDNVDPVKEAKAIVKELKKYDESLFDKPRWLVLNKLDMVPEEERKKRVKDFIKRFGWKGPVFEISALTHEGCSELVTEIYDYIAVQRQAEQRSEETPQMVEAARGIDSIDPDDPRFKIID</sequence>
<keyword id="KW-0963">Cytoplasm</keyword>
<keyword id="KW-0342">GTP-binding</keyword>
<keyword id="KW-0378">Hydrolase</keyword>
<keyword id="KW-0460">Magnesium</keyword>
<keyword id="KW-0479">Metal-binding</keyword>
<keyword id="KW-0547">Nucleotide-binding</keyword>
<keyword id="KW-1185">Reference proteome</keyword>
<comment type="function">
    <text evidence="1">An essential GTPase which binds GTP, GDP and possibly (p)ppGpp with moderate affinity, with high nucleotide exchange rates and a fairly low GTP hydrolysis rate. Plays a role in control of the cell cycle, stress response, ribosome biogenesis and in those bacteria that undergo differentiation, in morphogenesis control.</text>
</comment>
<comment type="cofactor">
    <cofactor evidence="1">
        <name>Mg(2+)</name>
        <dbReference type="ChEBI" id="CHEBI:18420"/>
    </cofactor>
</comment>
<comment type="subunit">
    <text evidence="1">Monomer.</text>
</comment>
<comment type="subcellular location">
    <subcellularLocation>
        <location evidence="1">Cytoplasm</location>
    </subcellularLocation>
</comment>
<comment type="similarity">
    <text evidence="1">Belongs to the TRAFAC class OBG-HflX-like GTPase superfamily. OBG GTPase family.</text>
</comment>
<protein>
    <recommendedName>
        <fullName evidence="1">GTPase Obg</fullName>
        <ecNumber evidence="1">3.6.5.-</ecNumber>
    </recommendedName>
    <alternativeName>
        <fullName evidence="1">GTP-binding protein Obg</fullName>
    </alternativeName>
</protein>
<gene>
    <name evidence="1" type="primary">obg</name>
    <name type="ordered locus">HEAR2785</name>
</gene>
<proteinExistence type="inferred from homology"/>